<comment type="function">
    <text evidence="1">Catalyzes the transfer of the diacylglyceryl group from phosphatidylglycerol to the sulfhydryl group of the N-terminal cysteine of a prolipoprotein, the first step in the formation of mature lipoproteins.</text>
</comment>
<comment type="catalytic activity">
    <reaction evidence="1">
        <text>L-cysteinyl-[prolipoprotein] + a 1,2-diacyl-sn-glycero-3-phospho-(1'-sn-glycerol) = an S-1,2-diacyl-sn-glyceryl-L-cysteinyl-[prolipoprotein] + sn-glycerol 1-phosphate + H(+)</text>
        <dbReference type="Rhea" id="RHEA:56712"/>
        <dbReference type="Rhea" id="RHEA-COMP:14679"/>
        <dbReference type="Rhea" id="RHEA-COMP:14680"/>
        <dbReference type="ChEBI" id="CHEBI:15378"/>
        <dbReference type="ChEBI" id="CHEBI:29950"/>
        <dbReference type="ChEBI" id="CHEBI:57685"/>
        <dbReference type="ChEBI" id="CHEBI:64716"/>
        <dbReference type="ChEBI" id="CHEBI:140658"/>
        <dbReference type="EC" id="2.5.1.145"/>
    </reaction>
</comment>
<comment type="pathway">
    <text evidence="1">Protein modification; lipoprotein biosynthesis (diacylglyceryl transfer).</text>
</comment>
<comment type="subcellular location">
    <subcellularLocation>
        <location evidence="1">Cell membrane</location>
        <topology evidence="1">Multi-pass membrane protein</topology>
    </subcellularLocation>
</comment>
<comment type="similarity">
    <text evidence="1">Belongs to the Lgt family.</text>
</comment>
<accession>Q1JMT5</accession>
<organism>
    <name type="scientific">Streptococcus pyogenes serotype M12 (strain MGAS9429)</name>
    <dbReference type="NCBI Taxonomy" id="370551"/>
    <lineage>
        <taxon>Bacteria</taxon>
        <taxon>Bacillati</taxon>
        <taxon>Bacillota</taxon>
        <taxon>Bacilli</taxon>
        <taxon>Lactobacillales</taxon>
        <taxon>Streptococcaceae</taxon>
        <taxon>Streptococcus</taxon>
    </lineage>
</organism>
<proteinExistence type="inferred from homology"/>
<evidence type="ECO:0000255" key="1">
    <source>
        <dbReference type="HAMAP-Rule" id="MF_01147"/>
    </source>
</evidence>
<reference key="1">
    <citation type="journal article" date="2006" name="Proc. Natl. Acad. Sci. U.S.A.">
        <title>Molecular genetic anatomy of inter- and intraserotype variation in the human bacterial pathogen group A Streptococcus.</title>
        <authorList>
            <person name="Beres S.B."/>
            <person name="Richter E.W."/>
            <person name="Nagiec M.J."/>
            <person name="Sumby P."/>
            <person name="Porcella S.F."/>
            <person name="DeLeo F.R."/>
            <person name="Musser J.M."/>
        </authorList>
    </citation>
    <scope>NUCLEOTIDE SEQUENCE [LARGE SCALE GENOMIC DNA]</scope>
    <source>
        <strain>MGAS9429</strain>
    </source>
</reference>
<gene>
    <name evidence="1" type="primary">lgt</name>
    <name type="ordered locus">MGAS9429_Spy0476</name>
</gene>
<feature type="chain" id="PRO_1000053511" description="Phosphatidylglycerol--prolipoprotein diacylglyceryl transferase">
    <location>
        <begin position="1"/>
        <end position="259"/>
    </location>
</feature>
<feature type="transmembrane region" description="Helical" evidence="1">
    <location>
        <begin position="12"/>
        <end position="32"/>
    </location>
</feature>
<feature type="transmembrane region" description="Helical" evidence="1">
    <location>
        <begin position="41"/>
        <end position="61"/>
    </location>
</feature>
<feature type="transmembrane region" description="Helical" evidence="1">
    <location>
        <begin position="80"/>
        <end position="100"/>
    </location>
</feature>
<feature type="transmembrane region" description="Helical" evidence="1">
    <location>
        <begin position="109"/>
        <end position="129"/>
    </location>
</feature>
<feature type="transmembrane region" description="Helical" evidence="1">
    <location>
        <begin position="167"/>
        <end position="187"/>
    </location>
</feature>
<feature type="transmembrane region" description="Helical" evidence="1">
    <location>
        <begin position="194"/>
        <end position="214"/>
    </location>
</feature>
<feature type="transmembrane region" description="Helical" evidence="1">
    <location>
        <begin position="226"/>
        <end position="246"/>
    </location>
</feature>
<feature type="binding site" evidence="1">
    <location>
        <position position="131"/>
    </location>
    <ligand>
        <name>a 1,2-diacyl-sn-glycero-3-phospho-(1'-sn-glycerol)</name>
        <dbReference type="ChEBI" id="CHEBI:64716"/>
    </ligand>
</feature>
<protein>
    <recommendedName>
        <fullName evidence="1">Phosphatidylglycerol--prolipoprotein diacylglyceryl transferase</fullName>
        <ecNumber evidence="1">2.5.1.145</ecNumber>
    </recommendedName>
</protein>
<dbReference type="EC" id="2.5.1.145" evidence="1"/>
<dbReference type="EMBL" id="CP000259">
    <property type="protein sequence ID" value="ABF31664.1"/>
    <property type="molecule type" value="Genomic_DNA"/>
</dbReference>
<dbReference type="RefSeq" id="WP_002990577.1">
    <property type="nucleotide sequence ID" value="NC_008021.1"/>
</dbReference>
<dbReference type="SMR" id="Q1JMT5"/>
<dbReference type="GeneID" id="69901201"/>
<dbReference type="KEGG" id="spk:MGAS9429_Spy0476"/>
<dbReference type="HOGENOM" id="CLU_013386_0_1_9"/>
<dbReference type="UniPathway" id="UPA00664"/>
<dbReference type="Proteomes" id="UP000002433">
    <property type="component" value="Chromosome"/>
</dbReference>
<dbReference type="GO" id="GO:0005886">
    <property type="term" value="C:plasma membrane"/>
    <property type="evidence" value="ECO:0007669"/>
    <property type="project" value="UniProtKB-SubCell"/>
</dbReference>
<dbReference type="GO" id="GO:0008961">
    <property type="term" value="F:phosphatidylglycerol-prolipoprotein diacylglyceryl transferase activity"/>
    <property type="evidence" value="ECO:0007669"/>
    <property type="project" value="UniProtKB-UniRule"/>
</dbReference>
<dbReference type="GO" id="GO:0042158">
    <property type="term" value="P:lipoprotein biosynthetic process"/>
    <property type="evidence" value="ECO:0007669"/>
    <property type="project" value="UniProtKB-UniRule"/>
</dbReference>
<dbReference type="HAMAP" id="MF_01147">
    <property type="entry name" value="Lgt"/>
    <property type="match status" value="1"/>
</dbReference>
<dbReference type="InterPro" id="IPR001640">
    <property type="entry name" value="Lgt"/>
</dbReference>
<dbReference type="NCBIfam" id="TIGR00544">
    <property type="entry name" value="lgt"/>
    <property type="match status" value="1"/>
</dbReference>
<dbReference type="PANTHER" id="PTHR30589:SF0">
    <property type="entry name" value="PHOSPHATIDYLGLYCEROL--PROLIPOPROTEIN DIACYLGLYCERYL TRANSFERASE"/>
    <property type="match status" value="1"/>
</dbReference>
<dbReference type="PANTHER" id="PTHR30589">
    <property type="entry name" value="PROLIPOPROTEIN DIACYLGLYCERYL TRANSFERASE"/>
    <property type="match status" value="1"/>
</dbReference>
<dbReference type="Pfam" id="PF01790">
    <property type="entry name" value="LGT"/>
    <property type="match status" value="1"/>
</dbReference>
<dbReference type="PROSITE" id="PS01311">
    <property type="entry name" value="LGT"/>
    <property type="match status" value="1"/>
</dbReference>
<sequence>MINPIALKCGPLAIHWYALCILSGLVLAVYLASKEAPKKGISSDAIFDFILIAFPLAIVGARIYYVIFEWSYYVKHLDEIIAIWNGGIAIYGGLITGALVLLAYCYNKVLNPIHFLDIAAPSVMVAQAIGRWGNFINQEAYGKAVSQLNYLPSFIQKQMFIEGSYRIPTFLYESLWNLLGFVIIMMWRRKPKSLLDGEIFAFYLIWYGSGRLVIEGMRTDSLMFLGIRISQYVSALLIIIGLIFVIKRRRQKGISYYQE</sequence>
<name>LGT_STRPC</name>
<keyword id="KW-1003">Cell membrane</keyword>
<keyword id="KW-0472">Membrane</keyword>
<keyword id="KW-0808">Transferase</keyword>
<keyword id="KW-0812">Transmembrane</keyword>
<keyword id="KW-1133">Transmembrane helix</keyword>